<accession>P9WGD4</accession>
<accession>L0T5J5</accession>
<accession>P0A610</accession>
<accession>P71711</accession>
<dbReference type="EMBL" id="AE000516">
    <property type="protein sequence ID" value="AAK44282.1"/>
    <property type="molecule type" value="Genomic_DNA"/>
</dbReference>
<dbReference type="PIR" id="F70913">
    <property type="entry name" value="F70913"/>
</dbReference>
<dbReference type="RefSeq" id="WP_003400534.1">
    <property type="nucleotide sequence ID" value="NZ_KK341227.1"/>
</dbReference>
<dbReference type="SMR" id="P9WGD4"/>
<dbReference type="KEGG" id="mtc:MT0060"/>
<dbReference type="PATRIC" id="fig|83331.31.peg.60"/>
<dbReference type="HOGENOM" id="CLU_078758_1_0_11"/>
<dbReference type="Proteomes" id="UP000001020">
    <property type="component" value="Chromosome"/>
</dbReference>
<dbReference type="GO" id="GO:0009295">
    <property type="term" value="C:nucleoid"/>
    <property type="evidence" value="ECO:0007669"/>
    <property type="project" value="TreeGrafter"/>
</dbReference>
<dbReference type="GO" id="GO:0003697">
    <property type="term" value="F:single-stranded DNA binding"/>
    <property type="evidence" value="ECO:0007669"/>
    <property type="project" value="UniProtKB-UniRule"/>
</dbReference>
<dbReference type="GO" id="GO:0006260">
    <property type="term" value="P:DNA replication"/>
    <property type="evidence" value="ECO:0007669"/>
    <property type="project" value="InterPro"/>
</dbReference>
<dbReference type="CDD" id="cd04496">
    <property type="entry name" value="SSB_OBF"/>
    <property type="match status" value="1"/>
</dbReference>
<dbReference type="FunFam" id="2.40.50.140:FF:000057">
    <property type="entry name" value="Single-stranded DNA-binding protein"/>
    <property type="match status" value="1"/>
</dbReference>
<dbReference type="Gene3D" id="2.40.50.140">
    <property type="entry name" value="Nucleic acid-binding proteins"/>
    <property type="match status" value="1"/>
</dbReference>
<dbReference type="HAMAP" id="MF_00984">
    <property type="entry name" value="SSB"/>
    <property type="match status" value="1"/>
</dbReference>
<dbReference type="InterPro" id="IPR012340">
    <property type="entry name" value="NA-bd_OB-fold"/>
</dbReference>
<dbReference type="InterPro" id="IPR000424">
    <property type="entry name" value="Primosome_PriB/ssb"/>
</dbReference>
<dbReference type="InterPro" id="IPR011344">
    <property type="entry name" value="ssDNA-bd"/>
</dbReference>
<dbReference type="NCBIfam" id="NF005851">
    <property type="entry name" value="PRK07772.1"/>
    <property type="match status" value="1"/>
</dbReference>
<dbReference type="NCBIfam" id="TIGR00621">
    <property type="entry name" value="ssb"/>
    <property type="match status" value="1"/>
</dbReference>
<dbReference type="PANTHER" id="PTHR10302">
    <property type="entry name" value="SINGLE-STRANDED DNA-BINDING PROTEIN"/>
    <property type="match status" value="1"/>
</dbReference>
<dbReference type="PANTHER" id="PTHR10302:SF27">
    <property type="entry name" value="SINGLE-STRANDED DNA-BINDING PROTEIN"/>
    <property type="match status" value="1"/>
</dbReference>
<dbReference type="Pfam" id="PF00436">
    <property type="entry name" value="SSB"/>
    <property type="match status" value="1"/>
</dbReference>
<dbReference type="SUPFAM" id="SSF50249">
    <property type="entry name" value="Nucleic acid-binding proteins"/>
    <property type="match status" value="1"/>
</dbReference>
<dbReference type="PROSITE" id="PS50935">
    <property type="entry name" value="SSB"/>
    <property type="match status" value="1"/>
</dbReference>
<feature type="chain" id="PRO_0000428381" description="Single-stranded DNA-binding protein">
    <location>
        <begin position="1"/>
        <end position="164"/>
    </location>
</feature>
<feature type="domain" description="SSB" evidence="1">
    <location>
        <begin position="1"/>
        <end position="110"/>
    </location>
</feature>
<feature type="region of interest" description="Disordered" evidence="2">
    <location>
        <begin position="120"/>
        <end position="164"/>
    </location>
</feature>
<reference key="1">
    <citation type="journal article" date="2002" name="J. Bacteriol.">
        <title>Whole-genome comparison of Mycobacterium tuberculosis clinical and laboratory strains.</title>
        <authorList>
            <person name="Fleischmann R.D."/>
            <person name="Alland D."/>
            <person name="Eisen J.A."/>
            <person name="Carpenter L."/>
            <person name="White O."/>
            <person name="Peterson J.D."/>
            <person name="DeBoy R.T."/>
            <person name="Dodson R.J."/>
            <person name="Gwinn M.L."/>
            <person name="Haft D.H."/>
            <person name="Hickey E.K."/>
            <person name="Kolonay J.F."/>
            <person name="Nelson W.C."/>
            <person name="Umayam L.A."/>
            <person name="Ermolaeva M.D."/>
            <person name="Salzberg S.L."/>
            <person name="Delcher A."/>
            <person name="Utterback T.R."/>
            <person name="Weidman J.F."/>
            <person name="Khouri H.M."/>
            <person name="Gill J."/>
            <person name="Mikula A."/>
            <person name="Bishai W."/>
            <person name="Jacobs W.R. Jr."/>
            <person name="Venter J.C."/>
            <person name="Fraser C.M."/>
        </authorList>
    </citation>
    <scope>NUCLEOTIDE SEQUENCE [LARGE SCALE GENOMIC DNA]</scope>
    <source>
        <strain>CDC 1551 / Oshkosh</strain>
    </source>
</reference>
<sequence>MAGDTTITIVGNLTADPELRFTPSGAAVANFTVASTPRIYDRQTGEWKDGEALFLRCNIWREAAENVAESLTRGARVIVSGRLKQRSFETREGEKRTVIEVEVDEIGPSLRYATAKVNKASRSGGFGSGSRPAPAQTSSASGDDPWGSAPASGSFGGGDDEPPF</sequence>
<name>SSB_MYCTO</name>
<gene>
    <name type="primary">ssb</name>
    <name type="ordered locus">MT0060</name>
</gene>
<proteinExistence type="inferred from homology"/>
<comment type="subunit">
    <text evidence="1">Homotetramer.</text>
</comment>
<protein>
    <recommendedName>
        <fullName evidence="1">Single-stranded DNA-binding protein</fullName>
        <shortName evidence="1">SSB</shortName>
    </recommendedName>
</protein>
<organism>
    <name type="scientific">Mycobacterium tuberculosis (strain CDC 1551 / Oshkosh)</name>
    <dbReference type="NCBI Taxonomy" id="83331"/>
    <lineage>
        <taxon>Bacteria</taxon>
        <taxon>Bacillati</taxon>
        <taxon>Actinomycetota</taxon>
        <taxon>Actinomycetes</taxon>
        <taxon>Mycobacteriales</taxon>
        <taxon>Mycobacteriaceae</taxon>
        <taxon>Mycobacterium</taxon>
        <taxon>Mycobacterium tuberculosis complex</taxon>
    </lineage>
</organism>
<evidence type="ECO:0000255" key="1">
    <source>
        <dbReference type="HAMAP-Rule" id="MF_00984"/>
    </source>
</evidence>
<evidence type="ECO:0000256" key="2">
    <source>
        <dbReference type="SAM" id="MobiDB-lite"/>
    </source>
</evidence>
<keyword id="KW-0238">DNA-binding</keyword>
<keyword id="KW-1185">Reference proteome</keyword>